<dbReference type="EC" id="3.6.1.23" evidence="1"/>
<dbReference type="EMBL" id="CP000941">
    <property type="protein sequence ID" value="ACA11166.1"/>
    <property type="molecule type" value="Genomic_DNA"/>
</dbReference>
<dbReference type="RefSeq" id="WP_004085509.1">
    <property type="nucleotide sequence ID" value="NC_010513.1"/>
</dbReference>
<dbReference type="SMR" id="B0U1I2"/>
<dbReference type="KEGG" id="xfm:Xfasm12_0127"/>
<dbReference type="HOGENOM" id="CLU_068508_1_1_6"/>
<dbReference type="UniPathway" id="UPA00610">
    <property type="reaction ID" value="UER00666"/>
</dbReference>
<dbReference type="GO" id="GO:0004170">
    <property type="term" value="F:dUTP diphosphatase activity"/>
    <property type="evidence" value="ECO:0007669"/>
    <property type="project" value="UniProtKB-UniRule"/>
</dbReference>
<dbReference type="GO" id="GO:0000287">
    <property type="term" value="F:magnesium ion binding"/>
    <property type="evidence" value="ECO:0007669"/>
    <property type="project" value="UniProtKB-UniRule"/>
</dbReference>
<dbReference type="GO" id="GO:0006226">
    <property type="term" value="P:dUMP biosynthetic process"/>
    <property type="evidence" value="ECO:0007669"/>
    <property type="project" value="UniProtKB-UniRule"/>
</dbReference>
<dbReference type="GO" id="GO:0046081">
    <property type="term" value="P:dUTP catabolic process"/>
    <property type="evidence" value="ECO:0007669"/>
    <property type="project" value="InterPro"/>
</dbReference>
<dbReference type="CDD" id="cd07557">
    <property type="entry name" value="trimeric_dUTPase"/>
    <property type="match status" value="1"/>
</dbReference>
<dbReference type="FunFam" id="2.70.40.10:FF:000002">
    <property type="entry name" value="dUTP diphosphatase"/>
    <property type="match status" value="1"/>
</dbReference>
<dbReference type="Gene3D" id="2.70.40.10">
    <property type="match status" value="1"/>
</dbReference>
<dbReference type="HAMAP" id="MF_00116">
    <property type="entry name" value="dUTPase_bact"/>
    <property type="match status" value="1"/>
</dbReference>
<dbReference type="InterPro" id="IPR008181">
    <property type="entry name" value="dUTPase"/>
</dbReference>
<dbReference type="InterPro" id="IPR029054">
    <property type="entry name" value="dUTPase-like"/>
</dbReference>
<dbReference type="InterPro" id="IPR036157">
    <property type="entry name" value="dUTPase-like_sf"/>
</dbReference>
<dbReference type="InterPro" id="IPR033704">
    <property type="entry name" value="dUTPase_trimeric"/>
</dbReference>
<dbReference type="NCBIfam" id="TIGR00576">
    <property type="entry name" value="dut"/>
    <property type="match status" value="1"/>
</dbReference>
<dbReference type="NCBIfam" id="NF001862">
    <property type="entry name" value="PRK00601.1"/>
    <property type="match status" value="1"/>
</dbReference>
<dbReference type="PANTHER" id="PTHR11241">
    <property type="entry name" value="DEOXYURIDINE 5'-TRIPHOSPHATE NUCLEOTIDOHYDROLASE"/>
    <property type="match status" value="1"/>
</dbReference>
<dbReference type="PANTHER" id="PTHR11241:SF0">
    <property type="entry name" value="DEOXYURIDINE 5'-TRIPHOSPHATE NUCLEOTIDOHYDROLASE"/>
    <property type="match status" value="1"/>
</dbReference>
<dbReference type="Pfam" id="PF00692">
    <property type="entry name" value="dUTPase"/>
    <property type="match status" value="1"/>
</dbReference>
<dbReference type="SUPFAM" id="SSF51283">
    <property type="entry name" value="dUTPase-like"/>
    <property type="match status" value="1"/>
</dbReference>
<feature type="chain" id="PRO_1000095004" description="Deoxyuridine 5'-triphosphate nucleotidohydrolase">
    <location>
        <begin position="1"/>
        <end position="155"/>
    </location>
</feature>
<feature type="binding site" evidence="1">
    <location>
        <begin position="74"/>
        <end position="76"/>
    </location>
    <ligand>
        <name>substrate</name>
    </ligand>
</feature>
<feature type="binding site" evidence="1">
    <location>
        <position position="87"/>
    </location>
    <ligand>
        <name>substrate</name>
    </ligand>
</feature>
<feature type="binding site" evidence="1">
    <location>
        <begin position="91"/>
        <end position="93"/>
    </location>
    <ligand>
        <name>substrate</name>
    </ligand>
</feature>
<proteinExistence type="inferred from homology"/>
<reference key="1">
    <citation type="journal article" date="2010" name="J. Bacteriol.">
        <title>Whole genome sequences of two Xylella fastidiosa strains (M12 and M23) causing almond leaf scorch disease in California.</title>
        <authorList>
            <person name="Chen J."/>
            <person name="Xie G."/>
            <person name="Han S."/>
            <person name="Chertkov O."/>
            <person name="Sims D."/>
            <person name="Civerolo E.L."/>
        </authorList>
    </citation>
    <scope>NUCLEOTIDE SEQUENCE [LARGE SCALE GENOMIC DNA]</scope>
    <source>
        <strain>M12</strain>
    </source>
</reference>
<organism>
    <name type="scientific">Xylella fastidiosa (strain M12)</name>
    <dbReference type="NCBI Taxonomy" id="405440"/>
    <lineage>
        <taxon>Bacteria</taxon>
        <taxon>Pseudomonadati</taxon>
        <taxon>Pseudomonadota</taxon>
        <taxon>Gammaproteobacteria</taxon>
        <taxon>Lysobacterales</taxon>
        <taxon>Lysobacteraceae</taxon>
        <taxon>Xylella</taxon>
    </lineage>
</organism>
<evidence type="ECO:0000255" key="1">
    <source>
        <dbReference type="HAMAP-Rule" id="MF_00116"/>
    </source>
</evidence>
<name>DUT_XYLFM</name>
<protein>
    <recommendedName>
        <fullName evidence="1">Deoxyuridine 5'-triphosphate nucleotidohydrolase</fullName>
        <shortName evidence="1">dUTPase</shortName>
        <ecNumber evidence="1">3.6.1.23</ecNumber>
    </recommendedName>
    <alternativeName>
        <fullName evidence="1">dUTP pyrophosphatase</fullName>
    </alternativeName>
</protein>
<keyword id="KW-0378">Hydrolase</keyword>
<keyword id="KW-0460">Magnesium</keyword>
<keyword id="KW-0479">Metal-binding</keyword>
<keyword id="KW-0546">Nucleotide metabolism</keyword>
<sequence>MSAAVKPLQIKILDPRLGTVWPLPTYATEASAGLDLRAALDAPMTLVPGDAELLSTGIAIHLVDPSLCAVVLPRSGLGHRHGIVLGNGTGLIDSDYQGPLLVSLWNRGREAFTIEPGDRIAQLVVLPIVRVVLQVVDTFVESGRGAGGFGHTGVR</sequence>
<comment type="function">
    <text evidence="1">This enzyme is involved in nucleotide metabolism: it produces dUMP, the immediate precursor of thymidine nucleotides and it decreases the intracellular concentration of dUTP so that uracil cannot be incorporated into DNA.</text>
</comment>
<comment type="catalytic activity">
    <reaction evidence="1">
        <text>dUTP + H2O = dUMP + diphosphate + H(+)</text>
        <dbReference type="Rhea" id="RHEA:10248"/>
        <dbReference type="ChEBI" id="CHEBI:15377"/>
        <dbReference type="ChEBI" id="CHEBI:15378"/>
        <dbReference type="ChEBI" id="CHEBI:33019"/>
        <dbReference type="ChEBI" id="CHEBI:61555"/>
        <dbReference type="ChEBI" id="CHEBI:246422"/>
        <dbReference type="EC" id="3.6.1.23"/>
    </reaction>
</comment>
<comment type="cofactor">
    <cofactor evidence="1">
        <name>Mg(2+)</name>
        <dbReference type="ChEBI" id="CHEBI:18420"/>
    </cofactor>
</comment>
<comment type="pathway">
    <text evidence="1">Pyrimidine metabolism; dUMP biosynthesis; dUMP from dCTP (dUTP route): step 2/2.</text>
</comment>
<comment type="similarity">
    <text evidence="1">Belongs to the dUTPase family.</text>
</comment>
<accession>B0U1I2</accession>
<gene>
    <name evidence="1" type="primary">dut</name>
    <name type="ordered locus">Xfasm12_0127</name>
</gene>